<gene>
    <name evidence="1" type="primary">rplO</name>
    <name type="ordered locus">CTA_0560</name>
</gene>
<feature type="chain" id="PRO_0000251499" description="Large ribosomal subunit protein uL15">
    <location>
        <begin position="1"/>
        <end position="144"/>
    </location>
</feature>
<feature type="region of interest" description="Disordered" evidence="2">
    <location>
        <begin position="1"/>
        <end position="49"/>
    </location>
</feature>
<protein>
    <recommendedName>
        <fullName evidence="1">Large ribosomal subunit protein uL15</fullName>
    </recommendedName>
    <alternativeName>
        <fullName evidence="3">50S ribosomal protein L15</fullName>
    </alternativeName>
</protein>
<evidence type="ECO:0000255" key="1">
    <source>
        <dbReference type="HAMAP-Rule" id="MF_01341"/>
    </source>
</evidence>
<evidence type="ECO:0000256" key="2">
    <source>
        <dbReference type="SAM" id="MobiDB-lite"/>
    </source>
</evidence>
<evidence type="ECO:0000305" key="3"/>
<dbReference type="EMBL" id="CP000051">
    <property type="protein sequence ID" value="AAX50786.1"/>
    <property type="molecule type" value="Genomic_DNA"/>
</dbReference>
<dbReference type="RefSeq" id="WP_011324761.1">
    <property type="nucleotide sequence ID" value="NC_007429.1"/>
</dbReference>
<dbReference type="SMR" id="Q3KLI6"/>
<dbReference type="KEGG" id="cta:CTA_0560"/>
<dbReference type="HOGENOM" id="CLU_055188_4_2_0"/>
<dbReference type="Proteomes" id="UP000002532">
    <property type="component" value="Chromosome"/>
</dbReference>
<dbReference type="GO" id="GO:0022625">
    <property type="term" value="C:cytosolic large ribosomal subunit"/>
    <property type="evidence" value="ECO:0007669"/>
    <property type="project" value="TreeGrafter"/>
</dbReference>
<dbReference type="GO" id="GO:0019843">
    <property type="term" value="F:rRNA binding"/>
    <property type="evidence" value="ECO:0007669"/>
    <property type="project" value="UniProtKB-UniRule"/>
</dbReference>
<dbReference type="GO" id="GO:0003735">
    <property type="term" value="F:structural constituent of ribosome"/>
    <property type="evidence" value="ECO:0007669"/>
    <property type="project" value="InterPro"/>
</dbReference>
<dbReference type="GO" id="GO:0006412">
    <property type="term" value="P:translation"/>
    <property type="evidence" value="ECO:0007669"/>
    <property type="project" value="UniProtKB-UniRule"/>
</dbReference>
<dbReference type="Gene3D" id="3.100.10.10">
    <property type="match status" value="1"/>
</dbReference>
<dbReference type="HAMAP" id="MF_01341">
    <property type="entry name" value="Ribosomal_uL15"/>
    <property type="match status" value="1"/>
</dbReference>
<dbReference type="InterPro" id="IPR030878">
    <property type="entry name" value="Ribosomal_uL15"/>
</dbReference>
<dbReference type="InterPro" id="IPR021131">
    <property type="entry name" value="Ribosomal_uL15/eL18"/>
</dbReference>
<dbReference type="InterPro" id="IPR036227">
    <property type="entry name" value="Ribosomal_uL15/eL18_sf"/>
</dbReference>
<dbReference type="InterPro" id="IPR005749">
    <property type="entry name" value="Ribosomal_uL15_bac-type"/>
</dbReference>
<dbReference type="NCBIfam" id="TIGR01071">
    <property type="entry name" value="rplO_bact"/>
    <property type="match status" value="1"/>
</dbReference>
<dbReference type="PANTHER" id="PTHR12934">
    <property type="entry name" value="50S RIBOSOMAL PROTEIN L15"/>
    <property type="match status" value="1"/>
</dbReference>
<dbReference type="PANTHER" id="PTHR12934:SF11">
    <property type="entry name" value="LARGE RIBOSOMAL SUBUNIT PROTEIN UL15M"/>
    <property type="match status" value="1"/>
</dbReference>
<dbReference type="Pfam" id="PF00828">
    <property type="entry name" value="Ribosomal_L27A"/>
    <property type="match status" value="1"/>
</dbReference>
<dbReference type="SUPFAM" id="SSF52080">
    <property type="entry name" value="Ribosomal proteins L15p and L18e"/>
    <property type="match status" value="1"/>
</dbReference>
<accession>Q3KLI6</accession>
<keyword id="KW-0687">Ribonucleoprotein</keyword>
<keyword id="KW-0689">Ribosomal protein</keyword>
<keyword id="KW-0694">RNA-binding</keyword>
<keyword id="KW-0699">rRNA-binding</keyword>
<proteinExistence type="inferred from homology"/>
<name>RL15_CHLTA</name>
<comment type="function">
    <text evidence="1">Binds to the 23S rRNA.</text>
</comment>
<comment type="subunit">
    <text evidence="1">Part of the 50S ribosomal subunit.</text>
</comment>
<comment type="similarity">
    <text evidence="1">Belongs to the universal ribosomal protein uL15 family.</text>
</comment>
<sequence length="144" mass="16190">MIKLECLQDPSPRKRRTKLLGRGPSSGHGKTSSRGHKGDCSRSGYKRRFGYEGGGVPLYRRVPTRGFSHKRFDKCVEEITTQRLNEIFDNGAEVSLEALKERKVIHRETSRVKVILKGALDKKLVWKDAAIVLSEGVKSLIEAV</sequence>
<reference key="1">
    <citation type="journal article" date="2005" name="Infect. Immun.">
        <title>Comparative genomic analysis of Chlamydia trachomatis oculotropic and genitotropic strains.</title>
        <authorList>
            <person name="Carlson J.H."/>
            <person name="Porcella S.F."/>
            <person name="McClarty G."/>
            <person name="Caldwell H.D."/>
        </authorList>
    </citation>
    <scope>NUCLEOTIDE SEQUENCE [LARGE SCALE GENOMIC DNA]</scope>
    <source>
        <strain>ATCC VR-571B / DSM 19440 / HAR-13</strain>
    </source>
</reference>
<organism>
    <name type="scientific">Chlamydia trachomatis serovar A (strain ATCC VR-571B / DSM 19440 / HAR-13)</name>
    <dbReference type="NCBI Taxonomy" id="315277"/>
    <lineage>
        <taxon>Bacteria</taxon>
        <taxon>Pseudomonadati</taxon>
        <taxon>Chlamydiota</taxon>
        <taxon>Chlamydiia</taxon>
        <taxon>Chlamydiales</taxon>
        <taxon>Chlamydiaceae</taxon>
        <taxon>Chlamydia/Chlamydophila group</taxon>
        <taxon>Chlamydia</taxon>
    </lineage>
</organism>